<reference key="1">
    <citation type="journal article" date="2015" name="Genome Announc.">
        <title>Draft genome sequence of the cellulolytic fungus Chaetomium globosum.</title>
        <authorList>
            <person name="Cuomo C.A."/>
            <person name="Untereiner W.A."/>
            <person name="Ma L.-J."/>
            <person name="Grabherr M."/>
            <person name="Birren B.W."/>
        </authorList>
    </citation>
    <scope>NUCLEOTIDE SEQUENCE [LARGE SCALE GENOMIC DNA]</scope>
    <source>
        <strain>ATCC 6205 / CBS 148.51 / DSM 1962 / NBRC 6347 / NRRL 1970</strain>
    </source>
</reference>
<feature type="chain" id="PRO_0000339319" description="Conserved oligomeric Golgi complex subunit 6">
    <location>
        <begin position="1"/>
        <end position="690"/>
    </location>
</feature>
<feature type="region of interest" description="Disordered" evidence="2">
    <location>
        <begin position="1"/>
        <end position="22"/>
    </location>
</feature>
<protein>
    <recommendedName>
        <fullName>Conserved oligomeric Golgi complex subunit 6</fullName>
        <shortName>COG complex subunit 6</shortName>
    </recommendedName>
    <alternativeName>
        <fullName>Component of oligomeric Golgi complex 6</fullName>
    </alternativeName>
</protein>
<comment type="function">
    <text evidence="1">Acts as a component of the peripheral membrane COG complex that is involved in intra-Golgi protein trafficking. COG is located at the cis-Golgi, and regulates tethering of retrograde intra-Golgi vesicles and possibly a number of other membrane trafficking events (By similarity).</text>
</comment>
<comment type="subcellular location">
    <subcellularLocation>
        <location evidence="1">Golgi apparatus membrane</location>
        <topology evidence="1">Peripheral membrane protein</topology>
    </subcellularLocation>
</comment>
<comment type="similarity">
    <text evidence="3">Belongs to the COG6 family.</text>
</comment>
<name>COG6_CHAGB</name>
<organism>
    <name type="scientific">Chaetomium globosum (strain ATCC 6205 / CBS 148.51 / DSM 1962 / NBRC 6347 / NRRL 1970)</name>
    <name type="common">Soil fungus</name>
    <dbReference type="NCBI Taxonomy" id="306901"/>
    <lineage>
        <taxon>Eukaryota</taxon>
        <taxon>Fungi</taxon>
        <taxon>Dikarya</taxon>
        <taxon>Ascomycota</taxon>
        <taxon>Pezizomycotina</taxon>
        <taxon>Sordariomycetes</taxon>
        <taxon>Sordariomycetidae</taxon>
        <taxon>Sordariales</taxon>
        <taxon>Chaetomiaceae</taxon>
        <taxon>Chaetomium</taxon>
    </lineage>
</organism>
<gene>
    <name type="primary">COG6</name>
    <name type="ORF">CHGG_00452</name>
</gene>
<dbReference type="EMBL" id="CH408029">
    <property type="protein sequence ID" value="EAQ92217.1"/>
    <property type="molecule type" value="Genomic_DNA"/>
</dbReference>
<dbReference type="RefSeq" id="XP_001219673.1">
    <property type="nucleotide sequence ID" value="XM_001219672.1"/>
</dbReference>
<dbReference type="SMR" id="Q2HH52"/>
<dbReference type="FunCoup" id="Q2HH52">
    <property type="interactions" value="229"/>
</dbReference>
<dbReference type="STRING" id="306901.Q2HH52"/>
<dbReference type="GeneID" id="4387544"/>
<dbReference type="VEuPathDB" id="FungiDB:CHGG_00452"/>
<dbReference type="eggNOG" id="KOG3758">
    <property type="taxonomic scope" value="Eukaryota"/>
</dbReference>
<dbReference type="HOGENOM" id="CLU_011361_1_0_1"/>
<dbReference type="InParanoid" id="Q2HH52"/>
<dbReference type="OMA" id="HSCLDFF"/>
<dbReference type="OrthoDB" id="272987at2759"/>
<dbReference type="Proteomes" id="UP000001056">
    <property type="component" value="Unassembled WGS sequence"/>
</dbReference>
<dbReference type="GO" id="GO:0000139">
    <property type="term" value="C:Golgi membrane"/>
    <property type="evidence" value="ECO:0007669"/>
    <property type="project" value="UniProtKB-SubCell"/>
</dbReference>
<dbReference type="GO" id="GO:0017119">
    <property type="term" value="C:Golgi transport complex"/>
    <property type="evidence" value="ECO:0007669"/>
    <property type="project" value="InterPro"/>
</dbReference>
<dbReference type="GO" id="GO:0006891">
    <property type="term" value="P:intra-Golgi vesicle-mediated transport"/>
    <property type="evidence" value="ECO:0007669"/>
    <property type="project" value="InterPro"/>
</dbReference>
<dbReference type="GO" id="GO:0015031">
    <property type="term" value="P:protein transport"/>
    <property type="evidence" value="ECO:0007669"/>
    <property type="project" value="UniProtKB-KW"/>
</dbReference>
<dbReference type="InterPro" id="IPR010490">
    <property type="entry name" value="COG6"/>
</dbReference>
<dbReference type="InterPro" id="IPR048369">
    <property type="entry name" value="COG6_C"/>
</dbReference>
<dbReference type="InterPro" id="IPR048368">
    <property type="entry name" value="COG6_N"/>
</dbReference>
<dbReference type="PANTHER" id="PTHR21506">
    <property type="entry name" value="COMPONENT OF OLIGOMERIC GOLGI COMPLEX 6"/>
    <property type="match status" value="1"/>
</dbReference>
<dbReference type="PANTHER" id="PTHR21506:SF0">
    <property type="entry name" value="CONSERVED OLIGOMERIC GOLGI COMPLEX SUBUNIT 6"/>
    <property type="match status" value="1"/>
</dbReference>
<dbReference type="Pfam" id="PF20653">
    <property type="entry name" value="COG6_C"/>
    <property type="match status" value="1"/>
</dbReference>
<dbReference type="Pfam" id="PF06419">
    <property type="entry name" value="COG6_N"/>
    <property type="match status" value="1"/>
</dbReference>
<dbReference type="SMART" id="SM01087">
    <property type="entry name" value="COG6"/>
    <property type="match status" value="1"/>
</dbReference>
<evidence type="ECO:0000250" key="1"/>
<evidence type="ECO:0000256" key="2">
    <source>
        <dbReference type="SAM" id="MobiDB-lite"/>
    </source>
</evidence>
<evidence type="ECO:0000305" key="3"/>
<sequence>MSSSSGPLSPQSTTATSSLAAKAANPLSSKVTTVLSSSYADTEFREALALLDERGVQNTAETRRQLRLDLQKEVIDSNGEIIDEFAKVAEQLRRIGTTIGRLNETFNEMKTQIGSAQKTTSSTLIEASQLMIQRRQVEQKQALLGAFNTNFVLSEDETAALTLTSEPVDDLFFAVLAKAKRISKDCEILLGFENQTLGLEIMEQTSKNLNLGFQKLYKWVQREFKTLNLENPQIGSSIRHALRVLAERPSLFQNCLDFLAEAREHVLSNSFHTALTGSSPSGIEDQSVKPIELVAHDTLRYVGDMLAWAHSAAVGEREALEGLFIGEGDEIAKGIQAGRDNEIWRLVAEDGEVSDTFDAVETLNELVDRDLSGAARLLRQRVEQVIQTNEETILAYKLANLLNFYKSTFSRLLSVGSALVETLGALESEALRQFRSLARDHVAAIQGDFQHTPADLRPPEFLLGALEQLAAIMKTYETSFTSSSDREEEFEPVLAEAFDPFISGSANMAKPLRAPSNSIFLINCLLTAERSLSRFDFTQRRAARLQAQIQEERARLVETQYRFFRGESGLDSLIVQLEPLGESKEDIQKALLLESLQSPALSQASQKLDDFLPSALMDAMENLKNLQDSRLVQSITEEAAEKFCVDFEHVEEMLILVDEATEQKQNEQDDIQGPRTLFPRTSGEIRVLLS</sequence>
<accession>Q2HH52</accession>
<keyword id="KW-0333">Golgi apparatus</keyword>
<keyword id="KW-0472">Membrane</keyword>
<keyword id="KW-0653">Protein transport</keyword>
<keyword id="KW-1185">Reference proteome</keyword>
<keyword id="KW-0813">Transport</keyword>
<proteinExistence type="inferred from homology"/>